<comment type="catalytic activity">
    <reaction evidence="1">
        <text>(S)-2,3,4,5-tetrahydrodipicolinate + succinyl-CoA + H2O = (S)-2-succinylamino-6-oxoheptanedioate + CoA</text>
        <dbReference type="Rhea" id="RHEA:17325"/>
        <dbReference type="ChEBI" id="CHEBI:15377"/>
        <dbReference type="ChEBI" id="CHEBI:15685"/>
        <dbReference type="ChEBI" id="CHEBI:16845"/>
        <dbReference type="ChEBI" id="CHEBI:57287"/>
        <dbReference type="ChEBI" id="CHEBI:57292"/>
        <dbReference type="EC" id="2.3.1.117"/>
    </reaction>
</comment>
<comment type="pathway">
    <text evidence="1">Amino-acid biosynthesis; L-lysine biosynthesis via DAP pathway; LL-2,6-diaminopimelate from (S)-tetrahydrodipicolinate (succinylase route): step 1/3.</text>
</comment>
<comment type="subunit">
    <text evidence="1">Homotrimer.</text>
</comment>
<comment type="subcellular location">
    <subcellularLocation>
        <location evidence="1">Cytoplasm</location>
    </subcellularLocation>
</comment>
<comment type="similarity">
    <text evidence="1">Belongs to the transferase hexapeptide repeat family.</text>
</comment>
<dbReference type="EC" id="2.3.1.117" evidence="1"/>
<dbReference type="EMBL" id="CP000681">
    <property type="protein sequence ID" value="ABP75073.1"/>
    <property type="molecule type" value="Genomic_DNA"/>
</dbReference>
<dbReference type="SMR" id="A4Y540"/>
<dbReference type="STRING" id="319224.Sputcn32_1345"/>
<dbReference type="KEGG" id="spc:Sputcn32_1345"/>
<dbReference type="eggNOG" id="COG2171">
    <property type="taxonomic scope" value="Bacteria"/>
</dbReference>
<dbReference type="HOGENOM" id="CLU_050859_0_1_6"/>
<dbReference type="UniPathway" id="UPA00034">
    <property type="reaction ID" value="UER00019"/>
</dbReference>
<dbReference type="GO" id="GO:0005737">
    <property type="term" value="C:cytoplasm"/>
    <property type="evidence" value="ECO:0007669"/>
    <property type="project" value="UniProtKB-SubCell"/>
</dbReference>
<dbReference type="GO" id="GO:0008666">
    <property type="term" value="F:2,3,4,5-tetrahydropyridine-2,6-dicarboxylate N-succinyltransferase activity"/>
    <property type="evidence" value="ECO:0007669"/>
    <property type="project" value="UniProtKB-UniRule"/>
</dbReference>
<dbReference type="GO" id="GO:0016779">
    <property type="term" value="F:nucleotidyltransferase activity"/>
    <property type="evidence" value="ECO:0007669"/>
    <property type="project" value="TreeGrafter"/>
</dbReference>
<dbReference type="GO" id="GO:0019877">
    <property type="term" value="P:diaminopimelate biosynthetic process"/>
    <property type="evidence" value="ECO:0007669"/>
    <property type="project" value="UniProtKB-UniRule"/>
</dbReference>
<dbReference type="GO" id="GO:0009089">
    <property type="term" value="P:lysine biosynthetic process via diaminopimelate"/>
    <property type="evidence" value="ECO:0007669"/>
    <property type="project" value="UniProtKB-UniRule"/>
</dbReference>
<dbReference type="CDD" id="cd03350">
    <property type="entry name" value="LbH_THP_succinylT"/>
    <property type="match status" value="1"/>
</dbReference>
<dbReference type="Gene3D" id="2.160.10.10">
    <property type="entry name" value="Hexapeptide repeat proteins"/>
    <property type="match status" value="1"/>
</dbReference>
<dbReference type="Gene3D" id="1.10.166.10">
    <property type="entry name" value="Tetrahydrodipicolinate-N-succinyltransferase, N-terminal domain"/>
    <property type="match status" value="1"/>
</dbReference>
<dbReference type="HAMAP" id="MF_00811">
    <property type="entry name" value="DapD"/>
    <property type="match status" value="1"/>
</dbReference>
<dbReference type="InterPro" id="IPR005664">
    <property type="entry name" value="DapD_Trfase_Hexpep_rpt_fam"/>
</dbReference>
<dbReference type="InterPro" id="IPR001451">
    <property type="entry name" value="Hexapep"/>
</dbReference>
<dbReference type="InterPro" id="IPR018357">
    <property type="entry name" value="Hexapep_transf_CS"/>
</dbReference>
<dbReference type="InterPro" id="IPR023180">
    <property type="entry name" value="THP_succinylTrfase_dom1"/>
</dbReference>
<dbReference type="InterPro" id="IPR037133">
    <property type="entry name" value="THP_succinylTrfase_N_sf"/>
</dbReference>
<dbReference type="InterPro" id="IPR011004">
    <property type="entry name" value="Trimer_LpxA-like_sf"/>
</dbReference>
<dbReference type="NCBIfam" id="TIGR00965">
    <property type="entry name" value="dapD"/>
    <property type="match status" value="1"/>
</dbReference>
<dbReference type="NCBIfam" id="NF008808">
    <property type="entry name" value="PRK11830.1"/>
    <property type="match status" value="1"/>
</dbReference>
<dbReference type="PANTHER" id="PTHR19136:SF52">
    <property type="entry name" value="2,3,4,5-TETRAHYDROPYRIDINE-2,6-DICARBOXYLATE N-SUCCINYLTRANSFERASE"/>
    <property type="match status" value="1"/>
</dbReference>
<dbReference type="PANTHER" id="PTHR19136">
    <property type="entry name" value="MOLYBDENUM COFACTOR GUANYLYLTRANSFERASE"/>
    <property type="match status" value="1"/>
</dbReference>
<dbReference type="Pfam" id="PF14602">
    <property type="entry name" value="Hexapep_2"/>
    <property type="match status" value="1"/>
</dbReference>
<dbReference type="Pfam" id="PF14805">
    <property type="entry name" value="THDPS_N_2"/>
    <property type="match status" value="1"/>
</dbReference>
<dbReference type="SUPFAM" id="SSF51161">
    <property type="entry name" value="Trimeric LpxA-like enzymes"/>
    <property type="match status" value="1"/>
</dbReference>
<dbReference type="PROSITE" id="PS00101">
    <property type="entry name" value="HEXAPEP_TRANSFERASES"/>
    <property type="match status" value="1"/>
</dbReference>
<gene>
    <name evidence="1" type="primary">dapD</name>
    <name type="ordered locus">Sputcn32_1345</name>
</gene>
<evidence type="ECO:0000255" key="1">
    <source>
        <dbReference type="HAMAP-Rule" id="MF_00811"/>
    </source>
</evidence>
<name>DAPD_SHEPC</name>
<sequence length="274" mass="29714">MEALRQRIEAAFEARADITPSTVDANVRSDVQHVINMLDKGEVRVAEKIDGQWHVHQWLKKAVLLSFRIFDNAVIDGAETKYFDKVPLKFAEYDEARFKAEAIRVVPSATVRKGSFIGKNTVLMPSYVNLGAYVDEGTMVDTWATVGSCAQIGKNVHLSGGVGIGGVLEPLQAGPTIIEDNCFIGARSEIVEGVVVEEGSVISMGVYIGQSTRIYDRETGEVHYGRVPAGSVVVSGNLPSACGKYSLYAAIIVKKVDAKTRGKVGINELLRIVD</sequence>
<accession>A4Y540</accession>
<reference key="1">
    <citation type="submission" date="2007-04" db="EMBL/GenBank/DDBJ databases">
        <title>Complete sequence of Shewanella putrefaciens CN-32.</title>
        <authorList>
            <consortium name="US DOE Joint Genome Institute"/>
            <person name="Copeland A."/>
            <person name="Lucas S."/>
            <person name="Lapidus A."/>
            <person name="Barry K."/>
            <person name="Detter J.C."/>
            <person name="Glavina del Rio T."/>
            <person name="Hammon N."/>
            <person name="Israni S."/>
            <person name="Dalin E."/>
            <person name="Tice H."/>
            <person name="Pitluck S."/>
            <person name="Chain P."/>
            <person name="Malfatti S."/>
            <person name="Shin M."/>
            <person name="Vergez L."/>
            <person name="Schmutz J."/>
            <person name="Larimer F."/>
            <person name="Land M."/>
            <person name="Hauser L."/>
            <person name="Kyrpides N."/>
            <person name="Mikhailova N."/>
            <person name="Romine M.F."/>
            <person name="Fredrickson J."/>
            <person name="Tiedje J."/>
            <person name="Richardson P."/>
        </authorList>
    </citation>
    <scope>NUCLEOTIDE SEQUENCE [LARGE SCALE GENOMIC DNA]</scope>
    <source>
        <strain>CN-32 / ATCC BAA-453</strain>
    </source>
</reference>
<proteinExistence type="inferred from homology"/>
<protein>
    <recommendedName>
        <fullName evidence="1">2,3,4,5-tetrahydropyridine-2,6-dicarboxylate N-succinyltransferase</fullName>
        <ecNumber evidence="1">2.3.1.117</ecNumber>
    </recommendedName>
    <alternativeName>
        <fullName evidence="1">Tetrahydrodipicolinate N-succinyltransferase</fullName>
        <shortName evidence="1">THDP succinyltransferase</shortName>
        <shortName evidence="1">THP succinyltransferase</shortName>
        <shortName evidence="1">Tetrahydropicolinate succinylase</shortName>
    </alternativeName>
</protein>
<organism>
    <name type="scientific">Shewanella putrefaciens (strain CN-32 / ATCC BAA-453)</name>
    <dbReference type="NCBI Taxonomy" id="319224"/>
    <lineage>
        <taxon>Bacteria</taxon>
        <taxon>Pseudomonadati</taxon>
        <taxon>Pseudomonadota</taxon>
        <taxon>Gammaproteobacteria</taxon>
        <taxon>Alteromonadales</taxon>
        <taxon>Shewanellaceae</taxon>
        <taxon>Shewanella</taxon>
    </lineage>
</organism>
<keyword id="KW-0012">Acyltransferase</keyword>
<keyword id="KW-0028">Amino-acid biosynthesis</keyword>
<keyword id="KW-0963">Cytoplasm</keyword>
<keyword id="KW-0220">Diaminopimelate biosynthesis</keyword>
<keyword id="KW-0457">Lysine biosynthesis</keyword>
<keyword id="KW-0677">Repeat</keyword>
<keyword id="KW-0808">Transferase</keyword>
<feature type="chain" id="PRO_1000047186" description="2,3,4,5-tetrahydropyridine-2,6-dicarboxylate N-succinyltransferase">
    <location>
        <begin position="1"/>
        <end position="274"/>
    </location>
</feature>
<feature type="binding site" evidence="1">
    <location>
        <position position="104"/>
    </location>
    <ligand>
        <name>substrate</name>
    </ligand>
</feature>
<feature type="binding site" evidence="1">
    <location>
        <position position="141"/>
    </location>
    <ligand>
        <name>substrate</name>
    </ligand>
</feature>